<dbReference type="EC" id="2.3.2.23"/>
<dbReference type="EC" id="2.3.2.25"/>
<dbReference type="EMBL" id="CR762043">
    <property type="protein sequence ID" value="CAJ83690.1"/>
    <property type="molecule type" value="mRNA"/>
</dbReference>
<dbReference type="RefSeq" id="NP_001016132.1">
    <property type="nucleotide sequence ID" value="NM_001016132.2"/>
</dbReference>
<dbReference type="SMR" id="Q28FC1"/>
<dbReference type="FunCoup" id="Q28FC1">
    <property type="interactions" value="4462"/>
</dbReference>
<dbReference type="STRING" id="8364.ENSXETP00000054166"/>
<dbReference type="GeneID" id="548886"/>
<dbReference type="KEGG" id="xtr:548886"/>
<dbReference type="AGR" id="Xenbase:XB-GENE-954746"/>
<dbReference type="CTD" id="55284"/>
<dbReference type="Xenbase" id="XB-GENE-954746">
    <property type="gene designation" value="ube2w"/>
</dbReference>
<dbReference type="InParanoid" id="Q28FC1"/>
<dbReference type="OrthoDB" id="406833at2759"/>
<dbReference type="UniPathway" id="UPA00143"/>
<dbReference type="Proteomes" id="UP000008143">
    <property type="component" value="Chromosome 6"/>
</dbReference>
<dbReference type="GO" id="GO:0005634">
    <property type="term" value="C:nucleus"/>
    <property type="evidence" value="ECO:0007669"/>
    <property type="project" value="UniProtKB-SubCell"/>
</dbReference>
<dbReference type="GO" id="GO:0005524">
    <property type="term" value="F:ATP binding"/>
    <property type="evidence" value="ECO:0007669"/>
    <property type="project" value="UniProtKB-KW"/>
</dbReference>
<dbReference type="GO" id="GO:0061631">
    <property type="term" value="F:ubiquitin conjugating enzyme activity"/>
    <property type="evidence" value="ECO:0007669"/>
    <property type="project" value="UniProtKB-EC"/>
</dbReference>
<dbReference type="GO" id="GO:0004842">
    <property type="term" value="F:ubiquitin-protein transferase activity"/>
    <property type="evidence" value="ECO:0000250"/>
    <property type="project" value="UniProtKB"/>
</dbReference>
<dbReference type="GO" id="GO:0071218">
    <property type="term" value="P:cellular response to misfolded protein"/>
    <property type="evidence" value="ECO:0000250"/>
    <property type="project" value="UniProtKB"/>
</dbReference>
<dbReference type="GO" id="GO:0006281">
    <property type="term" value="P:DNA repair"/>
    <property type="evidence" value="ECO:0007669"/>
    <property type="project" value="UniProtKB-KW"/>
</dbReference>
<dbReference type="GO" id="GO:0043161">
    <property type="term" value="P:proteasome-mediated ubiquitin-dependent protein catabolic process"/>
    <property type="evidence" value="ECO:0000250"/>
    <property type="project" value="UniProtKB"/>
</dbReference>
<dbReference type="GO" id="GO:0006513">
    <property type="term" value="P:protein monoubiquitination"/>
    <property type="evidence" value="ECO:0000250"/>
    <property type="project" value="UniProtKB"/>
</dbReference>
<dbReference type="GO" id="GO:0006515">
    <property type="term" value="P:protein quality control for misfolded or incompletely synthesized proteins"/>
    <property type="evidence" value="ECO:0000250"/>
    <property type="project" value="UniProtKB"/>
</dbReference>
<dbReference type="CDD" id="cd23808">
    <property type="entry name" value="UBCc_UBE2W"/>
    <property type="match status" value="1"/>
</dbReference>
<dbReference type="FunFam" id="3.10.110.10:FF:000022">
    <property type="entry name" value="Ubiquitin-conjugating enzyme E2 W"/>
    <property type="match status" value="1"/>
</dbReference>
<dbReference type="Gene3D" id="3.10.110.10">
    <property type="entry name" value="Ubiquitin Conjugating Enzyme"/>
    <property type="match status" value="1"/>
</dbReference>
<dbReference type="InterPro" id="IPR050113">
    <property type="entry name" value="Ub_conjugating_enzyme"/>
</dbReference>
<dbReference type="InterPro" id="IPR000608">
    <property type="entry name" value="UBQ-conjugat_E2_core"/>
</dbReference>
<dbReference type="InterPro" id="IPR016135">
    <property type="entry name" value="UBQ-conjugating_enzyme/RWD"/>
</dbReference>
<dbReference type="PANTHER" id="PTHR24067">
    <property type="entry name" value="UBIQUITIN-CONJUGATING ENZYME E2"/>
    <property type="match status" value="1"/>
</dbReference>
<dbReference type="Pfam" id="PF00179">
    <property type="entry name" value="UQ_con"/>
    <property type="match status" value="1"/>
</dbReference>
<dbReference type="SMART" id="SM00212">
    <property type="entry name" value="UBCc"/>
    <property type="match status" value="1"/>
</dbReference>
<dbReference type="SUPFAM" id="SSF54495">
    <property type="entry name" value="UBC-like"/>
    <property type="match status" value="1"/>
</dbReference>
<dbReference type="PROSITE" id="PS50127">
    <property type="entry name" value="UBC_2"/>
    <property type="match status" value="1"/>
</dbReference>
<proteinExistence type="evidence at transcript level"/>
<sequence>MASMQKRLQKELLALQNEPPPGMTLNEKSVQNSITQWIVDMEGAPGTLYEGEKFQLLFKFSSRYPFDSPQVMFTGDNIPVHPHVYSNGHICLSILTEDWSPALSVQSVCLSIISMLSSCKEKRRPPDNSFYVRTCNKNPKKTKWWYHDDTC</sequence>
<keyword id="KW-0067">ATP-binding</keyword>
<keyword id="KW-0227">DNA damage</keyword>
<keyword id="KW-0234">DNA repair</keyword>
<keyword id="KW-0547">Nucleotide-binding</keyword>
<keyword id="KW-0539">Nucleus</keyword>
<keyword id="KW-1185">Reference proteome</keyword>
<keyword id="KW-0808">Transferase</keyword>
<keyword id="KW-0833">Ubl conjugation pathway</keyword>
<reference key="1">
    <citation type="submission" date="2006-10" db="EMBL/GenBank/DDBJ databases">
        <authorList>
            <consortium name="Sanger Xenopus tropicalis EST/cDNA project"/>
        </authorList>
    </citation>
    <scope>NUCLEOTIDE SEQUENCE [LARGE SCALE MRNA]</scope>
    <source>
        <tissue>Egg</tissue>
    </source>
</reference>
<accession>Q28FC1</accession>
<comment type="function">
    <text evidence="1">Accepts ubiquitin from the E1 complex and catalyzes its covalent attachment to other proteins. Catalyzes monoubiquitination. Involved in degradation of misfolded chaperone substrate and DNA repair.</text>
</comment>
<comment type="catalytic activity">
    <reaction evidence="1 2">
        <text>S-ubiquitinyl-[E1 ubiquitin-activating enzyme]-L-cysteine + [E2 ubiquitin-conjugating enzyme]-L-cysteine = [E1 ubiquitin-activating enzyme]-L-cysteine + S-ubiquitinyl-[E2 ubiquitin-conjugating enzyme]-L-cysteine.</text>
        <dbReference type="EC" id="2.3.2.23"/>
    </reaction>
</comment>
<comment type="catalytic activity">
    <reaction evidence="1">
        <text>S-ubiquitinyl-[E1 ubiquitin-activating enzyme]-L-cysteine + [acceptor protein]-N-terminal-amino acid = [E1 ubiquitin-activating enzyme]-L-cysteine + N-terminal-ubiquitinyl-[acceptor protein].</text>
        <dbReference type="EC" id="2.3.2.25"/>
    </reaction>
</comment>
<comment type="pathway">
    <text evidence="2">Protein modification; protein ubiquitination.</text>
</comment>
<comment type="subcellular location">
    <subcellularLocation>
        <location evidence="1">Nucleus</location>
    </subcellularLocation>
</comment>
<comment type="similarity">
    <text evidence="2">Belongs to the ubiquitin-conjugating enzyme family.</text>
</comment>
<gene>
    <name type="primary">ube2w</name>
    <name type="ORF">TEgg096e02.1</name>
</gene>
<name>UBE2W_XENTR</name>
<organism>
    <name type="scientific">Xenopus tropicalis</name>
    <name type="common">Western clawed frog</name>
    <name type="synonym">Silurana tropicalis</name>
    <dbReference type="NCBI Taxonomy" id="8364"/>
    <lineage>
        <taxon>Eukaryota</taxon>
        <taxon>Metazoa</taxon>
        <taxon>Chordata</taxon>
        <taxon>Craniata</taxon>
        <taxon>Vertebrata</taxon>
        <taxon>Euteleostomi</taxon>
        <taxon>Amphibia</taxon>
        <taxon>Batrachia</taxon>
        <taxon>Anura</taxon>
        <taxon>Pipoidea</taxon>
        <taxon>Pipidae</taxon>
        <taxon>Xenopodinae</taxon>
        <taxon>Xenopus</taxon>
        <taxon>Silurana</taxon>
    </lineage>
</organism>
<evidence type="ECO:0000250" key="1">
    <source>
        <dbReference type="UniProtKB" id="Q96B02"/>
    </source>
</evidence>
<evidence type="ECO:0000255" key="2">
    <source>
        <dbReference type="PROSITE-ProRule" id="PRU00388"/>
    </source>
</evidence>
<protein>
    <recommendedName>
        <fullName>Ubiquitin-conjugating enzyme E2 W</fullName>
        <ecNumber>2.3.2.23</ecNumber>
    </recommendedName>
    <alternativeName>
        <fullName>E2 ubiquitin-conjugating enzyme W</fullName>
    </alternativeName>
    <alternativeName>
        <fullName>N-terminal E2 ubiquitin-conjugating enzyme</fullName>
        <ecNumber>2.3.2.25</ecNumber>
    </alternativeName>
    <alternativeName>
        <fullName>Ubiquitin carrier protein W</fullName>
    </alternativeName>
    <alternativeName>
        <fullName>Ubiquitin-protein ligase W</fullName>
    </alternativeName>
</protein>
<feature type="chain" id="PRO_0000416882" description="Ubiquitin-conjugating enzyme E2 W">
    <location>
        <begin position="1"/>
        <end position="151"/>
    </location>
</feature>
<feature type="domain" description="UBC core" evidence="2">
    <location>
        <begin position="3"/>
        <end position="151"/>
    </location>
</feature>
<feature type="active site" description="Glycyl thioester intermediate" evidence="2">
    <location>
        <position position="91"/>
    </location>
</feature>